<dbReference type="EMBL" id="CU928158">
    <property type="protein sequence ID" value="CAQ90732.1"/>
    <property type="molecule type" value="Genomic_DNA"/>
</dbReference>
<dbReference type="RefSeq" id="WP_000462905.1">
    <property type="nucleotide sequence ID" value="NC_011740.1"/>
</dbReference>
<dbReference type="SMR" id="B7LRN6"/>
<dbReference type="GeneID" id="98390389"/>
<dbReference type="KEGG" id="efe:EFER_3240"/>
<dbReference type="HOGENOM" id="CLU_158040_3_0_6"/>
<dbReference type="OrthoDB" id="9802388at2"/>
<dbReference type="Proteomes" id="UP000000745">
    <property type="component" value="Chromosome"/>
</dbReference>
<dbReference type="GO" id="GO:0003700">
    <property type="term" value="F:DNA-binding transcription factor activity"/>
    <property type="evidence" value="ECO:0007669"/>
    <property type="project" value="UniProtKB-UniRule"/>
</dbReference>
<dbReference type="GO" id="GO:0043565">
    <property type="term" value="F:sequence-specific DNA binding"/>
    <property type="evidence" value="ECO:0007669"/>
    <property type="project" value="InterPro"/>
</dbReference>
<dbReference type="FunFam" id="1.10.10.60:FF:000006">
    <property type="entry name" value="DNA-binding protein Fis"/>
    <property type="match status" value="1"/>
</dbReference>
<dbReference type="Gene3D" id="1.10.10.60">
    <property type="entry name" value="Homeodomain-like"/>
    <property type="match status" value="1"/>
</dbReference>
<dbReference type="HAMAP" id="MF_00166">
    <property type="entry name" value="DNA_binding_Fis"/>
    <property type="match status" value="1"/>
</dbReference>
<dbReference type="InterPro" id="IPR005412">
    <property type="entry name" value="Fis_DNA-bd"/>
</dbReference>
<dbReference type="InterPro" id="IPR009057">
    <property type="entry name" value="Homeodomain-like_sf"/>
</dbReference>
<dbReference type="InterPro" id="IPR002197">
    <property type="entry name" value="HTH_Fis"/>
</dbReference>
<dbReference type="InterPro" id="IPR050207">
    <property type="entry name" value="Trans_regulatory_Fis"/>
</dbReference>
<dbReference type="NCBIfam" id="NF001659">
    <property type="entry name" value="PRK00430.1"/>
    <property type="match status" value="1"/>
</dbReference>
<dbReference type="PANTHER" id="PTHR47918">
    <property type="entry name" value="DNA-BINDING PROTEIN FIS"/>
    <property type="match status" value="1"/>
</dbReference>
<dbReference type="PANTHER" id="PTHR47918:SF1">
    <property type="entry name" value="DNA-BINDING PROTEIN FIS"/>
    <property type="match status" value="1"/>
</dbReference>
<dbReference type="Pfam" id="PF02954">
    <property type="entry name" value="HTH_8"/>
    <property type="match status" value="1"/>
</dbReference>
<dbReference type="PIRSF" id="PIRSF002097">
    <property type="entry name" value="DNA-binding_Fis"/>
    <property type="match status" value="1"/>
</dbReference>
<dbReference type="PRINTS" id="PR01591">
    <property type="entry name" value="DNABINDNGFIS"/>
</dbReference>
<dbReference type="PRINTS" id="PR01590">
    <property type="entry name" value="HTHFIS"/>
</dbReference>
<dbReference type="SUPFAM" id="SSF46689">
    <property type="entry name" value="Homeodomain-like"/>
    <property type="match status" value="1"/>
</dbReference>
<gene>
    <name evidence="1" type="primary">fis</name>
    <name type="ordered locus">EFER_3240</name>
</gene>
<accession>B7LRN6</accession>
<protein>
    <recommendedName>
        <fullName evidence="1">DNA-binding protein Fis</fullName>
    </recommendedName>
</protein>
<comment type="function">
    <text evidence="1">Activates ribosomal RNA transcription. Plays a direct role in upstream activation of rRNA promoters.</text>
</comment>
<comment type="subunit">
    <text evidence="1">Homodimer.</text>
</comment>
<comment type="similarity">
    <text evidence="1">Belongs to the transcriptional regulatory Fis family.</text>
</comment>
<name>FIS_ESCF3</name>
<keyword id="KW-0010">Activator</keyword>
<keyword id="KW-0238">DNA-binding</keyword>
<keyword id="KW-0804">Transcription</keyword>
<keyword id="KW-0805">Transcription regulation</keyword>
<proteinExistence type="inferred from homology"/>
<evidence type="ECO:0000255" key="1">
    <source>
        <dbReference type="HAMAP-Rule" id="MF_00166"/>
    </source>
</evidence>
<sequence>MFEQRVNSDVLTVSTVNSQDQVTQKPLRDSVKQALKNYFAQLNGQDVNDLYELVLAEVEQPLLDMVMQYTRGNQTRAALMMGINRGTLRKKLKKYGMN</sequence>
<organism>
    <name type="scientific">Escherichia fergusonii (strain ATCC 35469 / DSM 13698 / CCUG 18766 / IAM 14443 / JCM 21226 / LMG 7866 / NBRC 102419 / NCTC 12128 / CDC 0568-73)</name>
    <dbReference type="NCBI Taxonomy" id="585054"/>
    <lineage>
        <taxon>Bacteria</taxon>
        <taxon>Pseudomonadati</taxon>
        <taxon>Pseudomonadota</taxon>
        <taxon>Gammaproteobacteria</taxon>
        <taxon>Enterobacterales</taxon>
        <taxon>Enterobacteriaceae</taxon>
        <taxon>Escherichia</taxon>
    </lineage>
</organism>
<feature type="chain" id="PRO_1000118226" description="DNA-binding protein Fis">
    <location>
        <begin position="1"/>
        <end position="98"/>
    </location>
</feature>
<feature type="DNA-binding region" description="H-T-H motif" evidence="1">
    <location>
        <begin position="74"/>
        <end position="93"/>
    </location>
</feature>
<reference key="1">
    <citation type="journal article" date="2009" name="PLoS Genet.">
        <title>Organised genome dynamics in the Escherichia coli species results in highly diverse adaptive paths.</title>
        <authorList>
            <person name="Touchon M."/>
            <person name="Hoede C."/>
            <person name="Tenaillon O."/>
            <person name="Barbe V."/>
            <person name="Baeriswyl S."/>
            <person name="Bidet P."/>
            <person name="Bingen E."/>
            <person name="Bonacorsi S."/>
            <person name="Bouchier C."/>
            <person name="Bouvet O."/>
            <person name="Calteau A."/>
            <person name="Chiapello H."/>
            <person name="Clermont O."/>
            <person name="Cruveiller S."/>
            <person name="Danchin A."/>
            <person name="Diard M."/>
            <person name="Dossat C."/>
            <person name="Karoui M.E."/>
            <person name="Frapy E."/>
            <person name="Garry L."/>
            <person name="Ghigo J.M."/>
            <person name="Gilles A.M."/>
            <person name="Johnson J."/>
            <person name="Le Bouguenec C."/>
            <person name="Lescat M."/>
            <person name="Mangenot S."/>
            <person name="Martinez-Jehanne V."/>
            <person name="Matic I."/>
            <person name="Nassif X."/>
            <person name="Oztas S."/>
            <person name="Petit M.A."/>
            <person name="Pichon C."/>
            <person name="Rouy Z."/>
            <person name="Ruf C.S."/>
            <person name="Schneider D."/>
            <person name="Tourret J."/>
            <person name="Vacherie B."/>
            <person name="Vallenet D."/>
            <person name="Medigue C."/>
            <person name="Rocha E.P.C."/>
            <person name="Denamur E."/>
        </authorList>
    </citation>
    <scope>NUCLEOTIDE SEQUENCE [LARGE SCALE GENOMIC DNA]</scope>
    <source>
        <strain>ATCC 35469 / DSM 13698 / BCRC 15582 / CCUG 18766 / IAM 14443 / JCM 21226 / LMG 7866 / NBRC 102419 / NCTC 12128 / CDC 0568-73</strain>
    </source>
</reference>